<sequence>WIMGHMVNAIEQVDEFLDLGANAIEFDVDFDDDGVAKYTHHGIPCDCGRLCTKYAVFTEYLDYVRQVTTPGDPKFRKELVLLALDLKLQRIPSEKAYAAGVDVATKLLDHYWMRGWNGGRAYILLNIPLVEDYEFIRAFKDTLRKEGHEQYNAKVGINFTGNEDLDEIREVLEKLGEDEHIWQADGITSCFPRGTERLKKALEKRDTPGYKYISKVYAWTLVRSSIMRRSLRLGVDGVMSNYPDRVVKVLKEKEFSDKFRLATYADNPWEKFTPI</sequence>
<protein>
    <recommendedName>
        <fullName evidence="6">Dermonecrotic toxin SpeSicTox-betaIIA2v</fullName>
        <ecNumber evidence="4">4.6.1.-</ecNumber>
    </recommendedName>
    <alternativeName>
        <fullName>Phospholipase D</fullName>
        <shortName>PLD</shortName>
    </alternativeName>
    <alternativeName>
        <fullName>Sphingomyelin phosphodiesterase D</fullName>
        <shortName>SMD</shortName>
        <shortName>SMase D</shortName>
        <shortName>Sphingomyelinase D</shortName>
    </alternativeName>
</protein>
<reference key="1">
    <citation type="journal article" date="2009" name="Mol. Biol. Evol.">
        <title>Molecular evolution, functional variation, and proposed nomenclature of the gene family that includes sphingomyelinase D in sicariid spider venoms.</title>
        <authorList>
            <person name="Binford G.J."/>
            <person name="Bodner M.R."/>
            <person name="Cordes M.H."/>
            <person name="Baldwin K.L."/>
            <person name="Rynerson M.R."/>
            <person name="Burns S.N."/>
            <person name="Zobel-Thropp P.A."/>
        </authorList>
    </citation>
    <scope>NUCLEOTIDE SEQUENCE [MRNA]</scope>
    <scope>NOMENCLATURE</scope>
    <source>
        <tissue>Venom gland</tissue>
    </source>
</reference>
<organism>
    <name type="scientific">Sicarius peruensis</name>
    <name type="common">Six-eyed sand spider</name>
    <dbReference type="NCBI Taxonomy" id="571541"/>
    <lineage>
        <taxon>Eukaryota</taxon>
        <taxon>Metazoa</taxon>
        <taxon>Ecdysozoa</taxon>
        <taxon>Arthropoda</taxon>
        <taxon>Chelicerata</taxon>
        <taxon>Arachnida</taxon>
        <taxon>Araneae</taxon>
        <taxon>Araneomorphae</taxon>
        <taxon>Haplogynae</taxon>
        <taxon>Scytodoidea</taxon>
        <taxon>Sicariidae</taxon>
        <taxon>Sicarius</taxon>
    </lineage>
</organism>
<feature type="chain" id="PRO_0000392877" description="Dermonecrotic toxin SpeSicTox-betaIIA2v">
    <location>
        <begin position="1" status="less than"/>
        <end position="275"/>
    </location>
</feature>
<feature type="active site" evidence="5">
    <location>
        <position position="5"/>
    </location>
</feature>
<feature type="active site" description="Nucleophile" evidence="5">
    <location>
        <position position="41"/>
    </location>
</feature>
<feature type="binding site" evidence="5">
    <location>
        <position position="25"/>
    </location>
    <ligand>
        <name>Mg(2+)</name>
        <dbReference type="ChEBI" id="CHEBI:18420"/>
    </ligand>
</feature>
<feature type="binding site" evidence="5">
    <location>
        <position position="27"/>
    </location>
    <ligand>
        <name>Mg(2+)</name>
        <dbReference type="ChEBI" id="CHEBI:18420"/>
    </ligand>
</feature>
<feature type="binding site" evidence="5">
    <location>
        <position position="85"/>
    </location>
    <ligand>
        <name>Mg(2+)</name>
        <dbReference type="ChEBI" id="CHEBI:18420"/>
    </ligand>
</feature>
<feature type="disulfide bond" evidence="3">
    <location>
        <begin position="45"/>
        <end position="51"/>
    </location>
</feature>
<feature type="disulfide bond" evidence="3">
    <location>
        <begin position="47"/>
        <end position="190"/>
    </location>
</feature>
<feature type="non-terminal residue">
    <location>
        <position position="1"/>
    </location>
</feature>
<accession>C0JB65</accession>
<proteinExistence type="evidence at transcript level"/>
<dbReference type="EC" id="4.6.1.-" evidence="4"/>
<dbReference type="EMBL" id="FJ171500">
    <property type="protein sequence ID" value="ACN48996.1"/>
    <property type="molecule type" value="mRNA"/>
</dbReference>
<dbReference type="SMR" id="C0JB65"/>
<dbReference type="GO" id="GO:0005576">
    <property type="term" value="C:extracellular region"/>
    <property type="evidence" value="ECO:0007669"/>
    <property type="project" value="UniProtKB-SubCell"/>
</dbReference>
<dbReference type="GO" id="GO:0016829">
    <property type="term" value="F:lyase activity"/>
    <property type="evidence" value="ECO:0007669"/>
    <property type="project" value="UniProtKB-KW"/>
</dbReference>
<dbReference type="GO" id="GO:0046872">
    <property type="term" value="F:metal ion binding"/>
    <property type="evidence" value="ECO:0007669"/>
    <property type="project" value="UniProtKB-KW"/>
</dbReference>
<dbReference type="GO" id="GO:0008081">
    <property type="term" value="F:phosphoric diester hydrolase activity"/>
    <property type="evidence" value="ECO:0007669"/>
    <property type="project" value="InterPro"/>
</dbReference>
<dbReference type="GO" id="GO:0090729">
    <property type="term" value="F:toxin activity"/>
    <property type="evidence" value="ECO:0007669"/>
    <property type="project" value="UniProtKB-KW"/>
</dbReference>
<dbReference type="GO" id="GO:0031640">
    <property type="term" value="P:killing of cells of another organism"/>
    <property type="evidence" value="ECO:0007669"/>
    <property type="project" value="UniProtKB-KW"/>
</dbReference>
<dbReference type="GO" id="GO:0016042">
    <property type="term" value="P:lipid catabolic process"/>
    <property type="evidence" value="ECO:0007669"/>
    <property type="project" value="UniProtKB-KW"/>
</dbReference>
<dbReference type="CDD" id="cd08576">
    <property type="entry name" value="GDPD_like_SMaseD_PLD"/>
    <property type="match status" value="1"/>
</dbReference>
<dbReference type="Gene3D" id="3.20.20.190">
    <property type="entry name" value="Phosphatidylinositol (PI) phosphodiesterase"/>
    <property type="match status" value="1"/>
</dbReference>
<dbReference type="InterPro" id="IPR017946">
    <property type="entry name" value="PLC-like_Pdiesterase_TIM-brl"/>
</dbReference>
<dbReference type="SUPFAM" id="SSF51695">
    <property type="entry name" value="PLC-like phosphodiesterases"/>
    <property type="match status" value="1"/>
</dbReference>
<evidence type="ECO:0000250" key="1">
    <source>
        <dbReference type="UniProtKB" id="A0A0D4WTV1"/>
    </source>
</evidence>
<evidence type="ECO:0000250" key="2">
    <source>
        <dbReference type="UniProtKB" id="A0A0D4WV12"/>
    </source>
</evidence>
<evidence type="ECO:0000250" key="3">
    <source>
        <dbReference type="UniProtKB" id="P0CE80"/>
    </source>
</evidence>
<evidence type="ECO:0000250" key="4">
    <source>
        <dbReference type="UniProtKB" id="Q4ZFU2"/>
    </source>
</evidence>
<evidence type="ECO:0000250" key="5">
    <source>
        <dbReference type="UniProtKB" id="Q8I914"/>
    </source>
</evidence>
<evidence type="ECO:0000303" key="6">
    <source>
    </source>
</evidence>
<evidence type="ECO:0000305" key="7"/>
<evidence type="ECO:0000305" key="8">
    <source>
    </source>
</evidence>
<keyword id="KW-0204">Cytolysis</keyword>
<keyword id="KW-1061">Dermonecrotic toxin</keyword>
<keyword id="KW-1015">Disulfide bond</keyword>
<keyword id="KW-0354">Hemolysis</keyword>
<keyword id="KW-0442">Lipid degradation</keyword>
<keyword id="KW-0443">Lipid metabolism</keyword>
<keyword id="KW-0456">Lyase</keyword>
<keyword id="KW-0460">Magnesium</keyword>
<keyword id="KW-0479">Metal-binding</keyword>
<keyword id="KW-0964">Secreted</keyword>
<keyword id="KW-0800">Toxin</keyword>
<comment type="function">
    <text evidence="1 3">Dermonecrotic toxins cleave the phosphodiester linkage between the phosphate and headgroup of certain phospholipids (sphingolipid and lysolipid substrates), forming an alcohol (often choline) and a cyclic phosphate (By similarity). This toxin acts on sphingomyelin (SM) (By similarity). It may also act on ceramide phosphoethanolamine (CPE), lysophosphatidylcholine (LPC) and lysophosphatidylethanolamine (LPE), but not on lysophosphatidylserine (LPS), and lysophosphatidylglycerol (LPG) (By similarity). It acts by transphosphatidylation, releasing exclusively cyclic phosphate products as second products (By similarity). Induces dermonecrosis, hemolysis, increased vascular permeability, edema, inflammatory response, and platelet aggregation (By similarity).</text>
</comment>
<comment type="catalytic activity">
    <reaction evidence="1">
        <text>an N-(acyl)-sphingosylphosphocholine = an N-(acyl)-sphingosyl-1,3-cyclic phosphate + choline</text>
        <dbReference type="Rhea" id="RHEA:60652"/>
        <dbReference type="ChEBI" id="CHEBI:15354"/>
        <dbReference type="ChEBI" id="CHEBI:64583"/>
        <dbReference type="ChEBI" id="CHEBI:143892"/>
    </reaction>
</comment>
<comment type="catalytic activity">
    <reaction evidence="1">
        <text>an N-(acyl)-sphingosylphosphoethanolamine = an N-(acyl)-sphingosyl-1,3-cyclic phosphate + ethanolamine</text>
        <dbReference type="Rhea" id="RHEA:60648"/>
        <dbReference type="ChEBI" id="CHEBI:57603"/>
        <dbReference type="ChEBI" id="CHEBI:143891"/>
        <dbReference type="ChEBI" id="CHEBI:143892"/>
    </reaction>
</comment>
<comment type="catalytic activity">
    <reaction evidence="1">
        <text>a 1-acyl-sn-glycero-3-phosphocholine = a 1-acyl-sn-glycero-2,3-cyclic phosphate + choline</text>
        <dbReference type="Rhea" id="RHEA:60700"/>
        <dbReference type="ChEBI" id="CHEBI:15354"/>
        <dbReference type="ChEBI" id="CHEBI:58168"/>
        <dbReference type="ChEBI" id="CHEBI:143947"/>
    </reaction>
</comment>
<comment type="catalytic activity">
    <reaction evidence="1">
        <text>a 1-acyl-sn-glycero-3-phosphoethanolamine = a 1-acyl-sn-glycero-2,3-cyclic phosphate + ethanolamine</text>
        <dbReference type="Rhea" id="RHEA:60704"/>
        <dbReference type="ChEBI" id="CHEBI:57603"/>
        <dbReference type="ChEBI" id="CHEBI:64381"/>
        <dbReference type="ChEBI" id="CHEBI:143947"/>
    </reaction>
</comment>
<comment type="cofactor">
    <cofactor evidence="5">
        <name>Mg(2+)</name>
        <dbReference type="ChEBI" id="CHEBI:18420"/>
    </cofactor>
    <text evidence="5">Binds 1 Mg(2+) ion per subunit.</text>
</comment>
<comment type="subcellular location">
    <subcellularLocation>
        <location evidence="8">Secreted</location>
    </subcellularLocation>
</comment>
<comment type="tissue specificity">
    <text evidence="8">Expressed by the venom gland.</text>
</comment>
<comment type="similarity">
    <text evidence="7">Belongs to the arthropod phospholipase D family. Class II subfamily.</text>
</comment>
<comment type="caution">
    <text evidence="1 2 4">The most common activity assay for dermonecrotic toxins detects enzymatic activity by monitoring choline release from substrate. Liberation of choline from sphingomyelin (SM) or lysophosphatidylcholine (LPC) is commonly assumed to result from substrate hydrolysis, giving either ceramide-1-phosphate (C1P) or lysophosphatidic acid (LPA), respectively, as a second product. However, two studies from Lajoie and colleagues (2013 and 2015) report the observation of exclusive formation of cyclic phosphate products as second products, resulting from intramolecular transphosphatidylation. Cyclic phosphates have vastly different biological properties from their monoester counterparts, and they may be relevant to the pathology of brown spider envenomation.</text>
</comment>
<name>B2I5_SICPE</name>